<gene>
    <name evidence="1" type="primary">speD</name>
    <name type="ordered locus">Smlt4305</name>
</gene>
<protein>
    <recommendedName>
        <fullName evidence="1">S-adenosylmethionine decarboxylase proenzyme</fullName>
        <shortName evidence="1">AdoMetDC</shortName>
        <shortName evidence="1">SAMDC</shortName>
        <ecNumber evidence="1">4.1.1.50</ecNumber>
    </recommendedName>
    <component>
        <recommendedName>
            <fullName evidence="1">S-adenosylmethionine decarboxylase beta chain</fullName>
        </recommendedName>
    </component>
    <component>
        <recommendedName>
            <fullName evidence="1">S-adenosylmethionine decarboxylase alpha chain</fullName>
        </recommendedName>
    </component>
</protein>
<keyword id="KW-0068">Autocatalytic cleavage</keyword>
<keyword id="KW-0210">Decarboxylase</keyword>
<keyword id="KW-0456">Lyase</keyword>
<keyword id="KW-0620">Polyamine biosynthesis</keyword>
<keyword id="KW-0670">Pyruvate</keyword>
<keyword id="KW-1185">Reference proteome</keyword>
<keyword id="KW-0949">S-adenosyl-L-methionine</keyword>
<keyword id="KW-0704">Schiff base</keyword>
<keyword id="KW-0745">Spermidine biosynthesis</keyword>
<keyword id="KW-0865">Zymogen</keyword>
<accession>B2FKK7</accession>
<feature type="chain" id="PRO_0000364415" description="S-adenosylmethionine decarboxylase beta chain" evidence="1">
    <location>
        <begin position="1"/>
        <end position="112"/>
    </location>
</feature>
<feature type="chain" id="PRO_0000364416" description="S-adenosylmethionine decarboxylase alpha chain" evidence="1">
    <location>
        <begin position="113"/>
        <end position="264"/>
    </location>
</feature>
<feature type="active site" description="Schiff-base intermediate with substrate; via pyruvic acid" evidence="1">
    <location>
        <position position="113"/>
    </location>
</feature>
<feature type="active site" description="Proton acceptor; for processing activity" evidence="1">
    <location>
        <position position="118"/>
    </location>
</feature>
<feature type="active site" description="Proton donor; for catalytic activity" evidence="1">
    <location>
        <position position="141"/>
    </location>
</feature>
<feature type="site" description="Cleavage (non-hydrolytic); by autolysis" evidence="1">
    <location>
        <begin position="112"/>
        <end position="113"/>
    </location>
</feature>
<feature type="modified residue" description="Pyruvic acid (Ser); by autocatalysis" evidence="1">
    <location>
        <position position="113"/>
    </location>
</feature>
<organism>
    <name type="scientific">Stenotrophomonas maltophilia (strain K279a)</name>
    <dbReference type="NCBI Taxonomy" id="522373"/>
    <lineage>
        <taxon>Bacteria</taxon>
        <taxon>Pseudomonadati</taxon>
        <taxon>Pseudomonadota</taxon>
        <taxon>Gammaproteobacteria</taxon>
        <taxon>Lysobacterales</taxon>
        <taxon>Lysobacteraceae</taxon>
        <taxon>Stenotrophomonas</taxon>
        <taxon>Stenotrophomonas maltophilia group</taxon>
    </lineage>
</organism>
<comment type="function">
    <text evidence="1">Catalyzes the decarboxylation of S-adenosylmethionine to S-adenosylmethioninamine (dcAdoMet), the propylamine donor required for the synthesis of the polyamines spermine and spermidine from the diamine putrescine.</text>
</comment>
<comment type="catalytic activity">
    <reaction evidence="1">
        <text>S-adenosyl-L-methionine + H(+) = S-adenosyl 3-(methylsulfanyl)propylamine + CO2</text>
        <dbReference type="Rhea" id="RHEA:15981"/>
        <dbReference type="ChEBI" id="CHEBI:15378"/>
        <dbReference type="ChEBI" id="CHEBI:16526"/>
        <dbReference type="ChEBI" id="CHEBI:57443"/>
        <dbReference type="ChEBI" id="CHEBI:59789"/>
        <dbReference type="EC" id="4.1.1.50"/>
    </reaction>
</comment>
<comment type="cofactor">
    <cofactor evidence="1">
        <name>pyruvate</name>
        <dbReference type="ChEBI" id="CHEBI:15361"/>
    </cofactor>
    <text evidence="1">Binds 1 pyruvoyl group covalently per subunit.</text>
</comment>
<comment type="pathway">
    <text evidence="1">Amine and polyamine biosynthesis; S-adenosylmethioninamine biosynthesis; S-adenosylmethioninamine from S-adenosyl-L-methionine: step 1/1.</text>
</comment>
<comment type="subunit">
    <text evidence="1">Heterooctamer of four alpha and four beta chains arranged as a tetramer of alpha/beta heterodimers.</text>
</comment>
<comment type="PTM">
    <text evidence="1">Is synthesized initially as an inactive proenzyme. Formation of the active enzyme involves a self-maturation process in which the active site pyruvoyl group is generated from an internal serine residue via an autocatalytic post-translational modification. Two non-identical subunits are generated from the proenzyme in this reaction, and the pyruvate is formed at the N-terminus of the alpha chain, which is derived from the carboxyl end of the proenzyme. The post-translation cleavage follows an unusual pathway, termed non-hydrolytic serinolysis, in which the side chain hydroxyl group of the serine supplies its oxygen atom to form the C-terminus of the beta chain, while the remainder of the serine residue undergoes an oxidative deamination to produce ammonia and the pyruvoyl group blocking the N-terminus of the alpha chain.</text>
</comment>
<comment type="similarity">
    <text evidence="1">Belongs to the prokaryotic AdoMetDC family. Type 2 subfamily.</text>
</comment>
<dbReference type="EC" id="4.1.1.50" evidence="1"/>
<dbReference type="EMBL" id="AM743169">
    <property type="protein sequence ID" value="CAQ47690.1"/>
    <property type="molecule type" value="Genomic_DNA"/>
</dbReference>
<dbReference type="RefSeq" id="WP_005411315.1">
    <property type="nucleotide sequence ID" value="NC_010943.1"/>
</dbReference>
<dbReference type="EnsemblBacteria" id="CAQ47690">
    <property type="protein sequence ID" value="CAQ47690"/>
    <property type="gene ID" value="Smlt4305"/>
</dbReference>
<dbReference type="GeneID" id="97262949"/>
<dbReference type="KEGG" id="sml:Smlt4305"/>
<dbReference type="eggNOG" id="COG1586">
    <property type="taxonomic scope" value="Bacteria"/>
</dbReference>
<dbReference type="HOGENOM" id="CLU_092007_0_0_6"/>
<dbReference type="UniPathway" id="UPA00331">
    <property type="reaction ID" value="UER00451"/>
</dbReference>
<dbReference type="Proteomes" id="UP000008840">
    <property type="component" value="Chromosome"/>
</dbReference>
<dbReference type="GO" id="GO:0005829">
    <property type="term" value="C:cytosol"/>
    <property type="evidence" value="ECO:0007669"/>
    <property type="project" value="TreeGrafter"/>
</dbReference>
<dbReference type="GO" id="GO:0004014">
    <property type="term" value="F:adenosylmethionine decarboxylase activity"/>
    <property type="evidence" value="ECO:0007669"/>
    <property type="project" value="UniProtKB-UniRule"/>
</dbReference>
<dbReference type="GO" id="GO:0008295">
    <property type="term" value="P:spermidine biosynthetic process"/>
    <property type="evidence" value="ECO:0007669"/>
    <property type="project" value="UniProtKB-UniRule"/>
</dbReference>
<dbReference type="FunFam" id="3.60.90.10:FF:000001">
    <property type="entry name" value="S-adenosylmethionine decarboxylase proenzyme"/>
    <property type="match status" value="1"/>
</dbReference>
<dbReference type="Gene3D" id="3.60.90.10">
    <property type="entry name" value="S-adenosylmethionine decarboxylase"/>
    <property type="match status" value="1"/>
</dbReference>
<dbReference type="HAMAP" id="MF_00465">
    <property type="entry name" value="AdoMetDC_2"/>
    <property type="match status" value="1"/>
</dbReference>
<dbReference type="InterPro" id="IPR003826">
    <property type="entry name" value="AdoMetDC_fam_prok"/>
</dbReference>
<dbReference type="InterPro" id="IPR009165">
    <property type="entry name" value="S-AdoMet_deCO2ase_bac"/>
</dbReference>
<dbReference type="InterPro" id="IPR016067">
    <property type="entry name" value="S-AdoMet_deCO2ase_core"/>
</dbReference>
<dbReference type="NCBIfam" id="TIGR03331">
    <property type="entry name" value="SAM_DCase_Eco"/>
    <property type="match status" value="1"/>
</dbReference>
<dbReference type="PANTHER" id="PTHR33866">
    <property type="entry name" value="S-ADENOSYLMETHIONINE DECARBOXYLASE PROENZYME"/>
    <property type="match status" value="1"/>
</dbReference>
<dbReference type="PANTHER" id="PTHR33866:SF1">
    <property type="entry name" value="S-ADENOSYLMETHIONINE DECARBOXYLASE PROENZYME"/>
    <property type="match status" value="1"/>
</dbReference>
<dbReference type="Pfam" id="PF02675">
    <property type="entry name" value="AdoMet_dc"/>
    <property type="match status" value="1"/>
</dbReference>
<dbReference type="PIRSF" id="PIRSF001356">
    <property type="entry name" value="SAM_decarboxylas"/>
    <property type="match status" value="1"/>
</dbReference>
<dbReference type="SUPFAM" id="SSF56276">
    <property type="entry name" value="S-adenosylmethionine decarboxylase"/>
    <property type="match status" value="1"/>
</dbReference>
<name>SPED_STRMK</name>
<evidence type="ECO:0000255" key="1">
    <source>
        <dbReference type="HAMAP-Rule" id="MF_00465"/>
    </source>
</evidence>
<sequence length="264" mass="30703">MVKPLPRLRLQGFNNLTKALSFNIYDVCYARTEEERQRYIEYIDEEYNADRLTQILTDVAEIIGANILNVARQDYDPQGASVTILISEEPVIDKKLAGKELISDAVVAHMDKSHITVHTYPETHPQEGIATFRADIDVATCGVISPLKALNYLIESLESDIVIMDYRVRGFTRDVKGKKHFIDHKINSIQNFLAKNIKSRYEMFDVNVYQENIFHTKMHLKDFDLDQYLFEEKAKNLSFKERMKIEALLKREIEELFHGRNLSE</sequence>
<reference key="1">
    <citation type="journal article" date="2008" name="Genome Biol.">
        <title>The complete genome, comparative and functional analysis of Stenotrophomonas maltophilia reveals an organism heavily shielded by drug resistance determinants.</title>
        <authorList>
            <person name="Crossman L.C."/>
            <person name="Gould V.C."/>
            <person name="Dow J.M."/>
            <person name="Vernikos G.S."/>
            <person name="Okazaki A."/>
            <person name="Sebaihia M."/>
            <person name="Saunders D."/>
            <person name="Arrowsmith C."/>
            <person name="Carver T."/>
            <person name="Peters N."/>
            <person name="Adlem E."/>
            <person name="Kerhornou A."/>
            <person name="Lord A."/>
            <person name="Murphy L."/>
            <person name="Seeger K."/>
            <person name="Squares R."/>
            <person name="Rutter S."/>
            <person name="Quail M.A."/>
            <person name="Rajandream M.A."/>
            <person name="Harris D."/>
            <person name="Churcher C."/>
            <person name="Bentley S.D."/>
            <person name="Parkhill J."/>
            <person name="Thomson N.R."/>
            <person name="Avison M.B."/>
        </authorList>
    </citation>
    <scope>NUCLEOTIDE SEQUENCE [LARGE SCALE GENOMIC DNA]</scope>
    <source>
        <strain>K279a</strain>
    </source>
</reference>
<proteinExistence type="inferred from homology"/>